<accession>B1HVA4</accession>
<keyword id="KW-0963">Cytoplasm</keyword>
<keyword id="KW-0227">DNA damage</keyword>
<keyword id="KW-0233">DNA recombination</keyword>
<keyword id="KW-0234">DNA repair</keyword>
<keyword id="KW-0238">DNA-binding</keyword>
<gene>
    <name evidence="1" type="primary">ruvA</name>
    <name type="ordered locus">Bsph_3938</name>
</gene>
<protein>
    <recommendedName>
        <fullName evidence="1">Holliday junction branch migration complex subunit RuvA</fullName>
    </recommendedName>
</protein>
<dbReference type="EMBL" id="CP000817">
    <property type="protein sequence ID" value="ACA41406.1"/>
    <property type="molecule type" value="Genomic_DNA"/>
</dbReference>
<dbReference type="RefSeq" id="WP_012295451.1">
    <property type="nucleotide sequence ID" value="NC_010382.1"/>
</dbReference>
<dbReference type="SMR" id="B1HVA4"/>
<dbReference type="EnsemblBacteria" id="ACA41406">
    <property type="protein sequence ID" value="ACA41406"/>
    <property type="gene ID" value="Bsph_3938"/>
</dbReference>
<dbReference type="KEGG" id="lsp:Bsph_3938"/>
<dbReference type="HOGENOM" id="CLU_087936_1_0_9"/>
<dbReference type="Proteomes" id="UP000002164">
    <property type="component" value="Chromosome"/>
</dbReference>
<dbReference type="GO" id="GO:0005737">
    <property type="term" value="C:cytoplasm"/>
    <property type="evidence" value="ECO:0007669"/>
    <property type="project" value="UniProtKB-SubCell"/>
</dbReference>
<dbReference type="GO" id="GO:0009379">
    <property type="term" value="C:Holliday junction helicase complex"/>
    <property type="evidence" value="ECO:0007669"/>
    <property type="project" value="InterPro"/>
</dbReference>
<dbReference type="GO" id="GO:0048476">
    <property type="term" value="C:Holliday junction resolvase complex"/>
    <property type="evidence" value="ECO:0007669"/>
    <property type="project" value="UniProtKB-UniRule"/>
</dbReference>
<dbReference type="GO" id="GO:0005524">
    <property type="term" value="F:ATP binding"/>
    <property type="evidence" value="ECO:0007669"/>
    <property type="project" value="InterPro"/>
</dbReference>
<dbReference type="GO" id="GO:0000400">
    <property type="term" value="F:four-way junction DNA binding"/>
    <property type="evidence" value="ECO:0007669"/>
    <property type="project" value="UniProtKB-UniRule"/>
</dbReference>
<dbReference type="GO" id="GO:0009378">
    <property type="term" value="F:four-way junction helicase activity"/>
    <property type="evidence" value="ECO:0007669"/>
    <property type="project" value="InterPro"/>
</dbReference>
<dbReference type="GO" id="GO:0006310">
    <property type="term" value="P:DNA recombination"/>
    <property type="evidence" value="ECO:0007669"/>
    <property type="project" value="UniProtKB-UniRule"/>
</dbReference>
<dbReference type="GO" id="GO:0006281">
    <property type="term" value="P:DNA repair"/>
    <property type="evidence" value="ECO:0007669"/>
    <property type="project" value="UniProtKB-UniRule"/>
</dbReference>
<dbReference type="CDD" id="cd14332">
    <property type="entry name" value="UBA_RuvA_C"/>
    <property type="match status" value="1"/>
</dbReference>
<dbReference type="Gene3D" id="1.10.150.20">
    <property type="entry name" value="5' to 3' exonuclease, C-terminal subdomain"/>
    <property type="match status" value="1"/>
</dbReference>
<dbReference type="Gene3D" id="2.40.50.140">
    <property type="entry name" value="Nucleic acid-binding proteins"/>
    <property type="match status" value="1"/>
</dbReference>
<dbReference type="HAMAP" id="MF_00031">
    <property type="entry name" value="DNA_HJ_migration_RuvA"/>
    <property type="match status" value="1"/>
</dbReference>
<dbReference type="InterPro" id="IPR013849">
    <property type="entry name" value="DNA_helicase_Holl-junc_RuvA_I"/>
</dbReference>
<dbReference type="InterPro" id="IPR003583">
    <property type="entry name" value="Hlx-hairpin-Hlx_DNA-bd_motif"/>
</dbReference>
<dbReference type="InterPro" id="IPR012340">
    <property type="entry name" value="NA-bd_OB-fold"/>
</dbReference>
<dbReference type="InterPro" id="IPR000085">
    <property type="entry name" value="RuvA"/>
</dbReference>
<dbReference type="InterPro" id="IPR010994">
    <property type="entry name" value="RuvA_2-like"/>
</dbReference>
<dbReference type="InterPro" id="IPR011114">
    <property type="entry name" value="RuvA_C"/>
</dbReference>
<dbReference type="InterPro" id="IPR036267">
    <property type="entry name" value="RuvA_C_sf"/>
</dbReference>
<dbReference type="NCBIfam" id="TIGR00084">
    <property type="entry name" value="ruvA"/>
    <property type="match status" value="1"/>
</dbReference>
<dbReference type="Pfam" id="PF14520">
    <property type="entry name" value="HHH_5"/>
    <property type="match status" value="1"/>
</dbReference>
<dbReference type="Pfam" id="PF07499">
    <property type="entry name" value="RuvA_C"/>
    <property type="match status" value="1"/>
</dbReference>
<dbReference type="Pfam" id="PF01330">
    <property type="entry name" value="RuvA_N"/>
    <property type="match status" value="1"/>
</dbReference>
<dbReference type="SMART" id="SM00278">
    <property type="entry name" value="HhH1"/>
    <property type="match status" value="2"/>
</dbReference>
<dbReference type="SUPFAM" id="SSF46929">
    <property type="entry name" value="DNA helicase RuvA subunit, C-terminal domain"/>
    <property type="match status" value="1"/>
</dbReference>
<dbReference type="SUPFAM" id="SSF50249">
    <property type="entry name" value="Nucleic acid-binding proteins"/>
    <property type="match status" value="1"/>
</dbReference>
<dbReference type="SUPFAM" id="SSF47781">
    <property type="entry name" value="RuvA domain 2-like"/>
    <property type="match status" value="1"/>
</dbReference>
<feature type="chain" id="PRO_1000090335" description="Holliday junction branch migration complex subunit RuvA">
    <location>
        <begin position="1"/>
        <end position="206"/>
    </location>
</feature>
<feature type="region of interest" description="Domain I" evidence="1">
    <location>
        <begin position="1"/>
        <end position="62"/>
    </location>
</feature>
<feature type="region of interest" description="Domain II" evidence="1">
    <location>
        <begin position="63"/>
        <end position="141"/>
    </location>
</feature>
<feature type="region of interest" description="Flexible linker" evidence="1">
    <location>
        <begin position="142"/>
        <end position="152"/>
    </location>
</feature>
<feature type="region of interest" description="Domain III" evidence="1">
    <location>
        <begin position="153"/>
        <end position="206"/>
    </location>
</feature>
<reference key="1">
    <citation type="journal article" date="2008" name="J. Bacteriol.">
        <title>Complete genome sequence of the mosquitocidal bacterium Bacillus sphaericus C3-41 and comparison with those of closely related Bacillus species.</title>
        <authorList>
            <person name="Hu X."/>
            <person name="Fan W."/>
            <person name="Han B."/>
            <person name="Liu H."/>
            <person name="Zheng D."/>
            <person name="Li Q."/>
            <person name="Dong W."/>
            <person name="Yan J."/>
            <person name="Gao M."/>
            <person name="Berry C."/>
            <person name="Yuan Z."/>
        </authorList>
    </citation>
    <scope>NUCLEOTIDE SEQUENCE [LARGE SCALE GENOMIC DNA]</scope>
    <source>
        <strain>C3-41</strain>
    </source>
</reference>
<evidence type="ECO:0000255" key="1">
    <source>
        <dbReference type="HAMAP-Rule" id="MF_00031"/>
    </source>
</evidence>
<comment type="function">
    <text evidence="1">The RuvA-RuvB-RuvC complex processes Holliday junction (HJ) DNA during genetic recombination and DNA repair, while the RuvA-RuvB complex plays an important role in the rescue of blocked DNA replication forks via replication fork reversal (RFR). RuvA specifically binds to HJ cruciform DNA, conferring on it an open structure. The RuvB hexamer acts as an ATP-dependent pump, pulling dsDNA into and through the RuvAB complex. HJ branch migration allows RuvC to scan DNA until it finds its consensus sequence, where it cleaves and resolves the cruciform DNA.</text>
</comment>
<comment type="subunit">
    <text evidence="1">Homotetramer. Forms an RuvA(8)-RuvB(12)-Holliday junction (HJ) complex. HJ DNA is sandwiched between 2 RuvA tetramers; dsDNA enters through RuvA and exits via RuvB. An RuvB hexamer assembles on each DNA strand where it exits the tetramer. Each RuvB hexamer is contacted by two RuvA subunits (via domain III) on 2 adjacent RuvB subunits; this complex drives branch migration. In the full resolvosome a probable DNA-RuvA(4)-RuvB(12)-RuvC(2) complex forms which resolves the HJ.</text>
</comment>
<comment type="subcellular location">
    <subcellularLocation>
        <location evidence="1">Cytoplasm</location>
    </subcellularLocation>
</comment>
<comment type="domain">
    <text evidence="1">Has three domains with a flexible linker between the domains II and III and assumes an 'L' shape. Domain III is highly mobile and contacts RuvB.</text>
</comment>
<comment type="similarity">
    <text evidence="1">Belongs to the RuvA family.</text>
</comment>
<sequence>MYDYLKGLITRITPEYIVLEQKGIGWQLNTPNPFAFRTSAMEQQIYVHLHVREDAQVLYGFPNLDQRELFRKLILVSGIGPKGALAILATGNPQQVISAIEREDETFLVKFPGVGKKTARQMILDLKGKLGSLLETIELPSTEDELPLFGVHPYKHELEEAILALAALGYSEKELEKIRPLLEDNDKLETTDAYMKQALQLLLKLK</sequence>
<proteinExistence type="inferred from homology"/>
<name>RUVA_LYSSC</name>
<organism>
    <name type="scientific">Lysinibacillus sphaericus (strain C3-41)</name>
    <dbReference type="NCBI Taxonomy" id="444177"/>
    <lineage>
        <taxon>Bacteria</taxon>
        <taxon>Bacillati</taxon>
        <taxon>Bacillota</taxon>
        <taxon>Bacilli</taxon>
        <taxon>Bacillales</taxon>
        <taxon>Bacillaceae</taxon>
        <taxon>Lysinibacillus</taxon>
    </lineage>
</organism>